<feature type="chain" id="PRO_1000086454" description="Large ribosomal subunit protein uL3">
    <location>
        <begin position="1"/>
        <end position="211"/>
    </location>
</feature>
<feature type="modified residue" description="N5-methylglutamine" evidence="1">
    <location>
        <position position="150"/>
    </location>
</feature>
<accession>B0KK67</accession>
<reference key="1">
    <citation type="submission" date="2008-01" db="EMBL/GenBank/DDBJ databases">
        <title>Complete sequence of Pseudomonas putida GB-1.</title>
        <authorList>
            <consortium name="US DOE Joint Genome Institute"/>
            <person name="Copeland A."/>
            <person name="Lucas S."/>
            <person name="Lapidus A."/>
            <person name="Barry K."/>
            <person name="Glavina del Rio T."/>
            <person name="Dalin E."/>
            <person name="Tice H."/>
            <person name="Pitluck S."/>
            <person name="Bruce D."/>
            <person name="Goodwin L."/>
            <person name="Chertkov O."/>
            <person name="Brettin T."/>
            <person name="Detter J.C."/>
            <person name="Han C."/>
            <person name="Kuske C.R."/>
            <person name="Schmutz J."/>
            <person name="Larimer F."/>
            <person name="Land M."/>
            <person name="Hauser L."/>
            <person name="Kyrpides N."/>
            <person name="Kim E."/>
            <person name="McCarthy J.K."/>
            <person name="Richardson P."/>
        </authorList>
    </citation>
    <scope>NUCLEOTIDE SEQUENCE [LARGE SCALE GENOMIC DNA]</scope>
    <source>
        <strain>GB-1</strain>
    </source>
</reference>
<sequence>MTIGVIGRKCGMTRIFTEEGVSIPVTVIEIEPNRVTQFKTEETDGYRAVQVTVGERRASRVTAAQAGHFAKANVAAGRGVWEFRLEEGDFQAGDLIKAELFTAGQLVDVTGQSKGKGFAGTIKRWNFRGQDNTHGNSVSHRVPGSIGQCQTPGRVFKGKKMSGHMGAERVTVQSLEVVRVDAERNLLLIKGAVPGATGGDVVVRPAVKARG</sequence>
<keyword id="KW-0488">Methylation</keyword>
<keyword id="KW-0687">Ribonucleoprotein</keyword>
<keyword id="KW-0689">Ribosomal protein</keyword>
<keyword id="KW-0694">RNA-binding</keyword>
<keyword id="KW-0699">rRNA-binding</keyword>
<comment type="function">
    <text evidence="1">One of the primary rRNA binding proteins, it binds directly near the 3'-end of the 23S rRNA, where it nucleates assembly of the 50S subunit.</text>
</comment>
<comment type="subunit">
    <text evidence="1">Part of the 50S ribosomal subunit. Forms a cluster with proteins L14 and L19.</text>
</comment>
<comment type="PTM">
    <text evidence="1">Methylated by PrmB.</text>
</comment>
<comment type="similarity">
    <text evidence="1">Belongs to the universal ribosomal protein uL3 family.</text>
</comment>
<gene>
    <name evidence="1" type="primary">rplC</name>
    <name type="ordered locus">PputGB1_0484</name>
</gene>
<name>RL3_PSEPG</name>
<proteinExistence type="inferred from homology"/>
<evidence type="ECO:0000255" key="1">
    <source>
        <dbReference type="HAMAP-Rule" id="MF_01325"/>
    </source>
</evidence>
<evidence type="ECO:0000305" key="2"/>
<protein>
    <recommendedName>
        <fullName evidence="1">Large ribosomal subunit protein uL3</fullName>
    </recommendedName>
    <alternativeName>
        <fullName evidence="2">50S ribosomal protein L3</fullName>
    </alternativeName>
</protein>
<dbReference type="EMBL" id="CP000926">
    <property type="protein sequence ID" value="ABY96395.1"/>
    <property type="molecule type" value="Genomic_DNA"/>
</dbReference>
<dbReference type="RefSeq" id="WP_003255486.1">
    <property type="nucleotide sequence ID" value="NC_010322.1"/>
</dbReference>
<dbReference type="SMR" id="B0KK67"/>
<dbReference type="GeneID" id="83677752"/>
<dbReference type="KEGG" id="ppg:PputGB1_0484"/>
<dbReference type="eggNOG" id="COG0087">
    <property type="taxonomic scope" value="Bacteria"/>
</dbReference>
<dbReference type="HOGENOM" id="CLU_044142_4_1_6"/>
<dbReference type="Proteomes" id="UP000002157">
    <property type="component" value="Chromosome"/>
</dbReference>
<dbReference type="GO" id="GO:0022625">
    <property type="term" value="C:cytosolic large ribosomal subunit"/>
    <property type="evidence" value="ECO:0007669"/>
    <property type="project" value="TreeGrafter"/>
</dbReference>
<dbReference type="GO" id="GO:0019843">
    <property type="term" value="F:rRNA binding"/>
    <property type="evidence" value="ECO:0007669"/>
    <property type="project" value="UniProtKB-UniRule"/>
</dbReference>
<dbReference type="GO" id="GO:0003735">
    <property type="term" value="F:structural constituent of ribosome"/>
    <property type="evidence" value="ECO:0007669"/>
    <property type="project" value="InterPro"/>
</dbReference>
<dbReference type="GO" id="GO:0006412">
    <property type="term" value="P:translation"/>
    <property type="evidence" value="ECO:0007669"/>
    <property type="project" value="UniProtKB-UniRule"/>
</dbReference>
<dbReference type="FunFam" id="2.40.30.10:FF:000004">
    <property type="entry name" value="50S ribosomal protein L3"/>
    <property type="match status" value="1"/>
</dbReference>
<dbReference type="FunFam" id="3.30.160.810:FF:000001">
    <property type="entry name" value="50S ribosomal protein L3"/>
    <property type="match status" value="1"/>
</dbReference>
<dbReference type="Gene3D" id="3.30.160.810">
    <property type="match status" value="1"/>
</dbReference>
<dbReference type="Gene3D" id="2.40.30.10">
    <property type="entry name" value="Translation factors"/>
    <property type="match status" value="1"/>
</dbReference>
<dbReference type="HAMAP" id="MF_01325_B">
    <property type="entry name" value="Ribosomal_uL3_B"/>
    <property type="match status" value="1"/>
</dbReference>
<dbReference type="InterPro" id="IPR000597">
    <property type="entry name" value="Ribosomal_uL3"/>
</dbReference>
<dbReference type="InterPro" id="IPR019927">
    <property type="entry name" value="Ribosomal_uL3_bac/org-type"/>
</dbReference>
<dbReference type="InterPro" id="IPR019926">
    <property type="entry name" value="Ribosomal_uL3_CS"/>
</dbReference>
<dbReference type="InterPro" id="IPR009000">
    <property type="entry name" value="Transl_B-barrel_sf"/>
</dbReference>
<dbReference type="NCBIfam" id="TIGR03625">
    <property type="entry name" value="L3_bact"/>
    <property type="match status" value="1"/>
</dbReference>
<dbReference type="PANTHER" id="PTHR11229">
    <property type="entry name" value="50S RIBOSOMAL PROTEIN L3"/>
    <property type="match status" value="1"/>
</dbReference>
<dbReference type="PANTHER" id="PTHR11229:SF16">
    <property type="entry name" value="LARGE RIBOSOMAL SUBUNIT PROTEIN UL3C"/>
    <property type="match status" value="1"/>
</dbReference>
<dbReference type="Pfam" id="PF00297">
    <property type="entry name" value="Ribosomal_L3"/>
    <property type="match status" value="1"/>
</dbReference>
<dbReference type="SUPFAM" id="SSF50447">
    <property type="entry name" value="Translation proteins"/>
    <property type="match status" value="1"/>
</dbReference>
<dbReference type="PROSITE" id="PS00474">
    <property type="entry name" value="RIBOSOMAL_L3"/>
    <property type="match status" value="1"/>
</dbReference>
<organism>
    <name type="scientific">Pseudomonas putida (strain GB-1)</name>
    <dbReference type="NCBI Taxonomy" id="76869"/>
    <lineage>
        <taxon>Bacteria</taxon>
        <taxon>Pseudomonadati</taxon>
        <taxon>Pseudomonadota</taxon>
        <taxon>Gammaproteobacteria</taxon>
        <taxon>Pseudomonadales</taxon>
        <taxon>Pseudomonadaceae</taxon>
        <taxon>Pseudomonas</taxon>
    </lineage>
</organism>